<sequence>MHLLNLTLSSPTNVSTAVVGSFSGSKSQEILCVRGGTKLEIFKLNATTGQLDTIVSTEAFGTIRNIAGFRLAGMTKDYILATSDSGRLSILEFVISPTPHFESLYQEVFGKSGSRRIVPGQFLAVDPKGRSCLVGSLEKTKLVYVLNRNTEGKLYPSSPLEAHKNHTLVTHIVGVDQGYDNPLYAALETDYSESDQDSTGEAYENTQKHLTFYELDLGLNHVVRKWSEPTDRRANLLVQVPGGQNANSDRFEGPSGVLVCTEDHIIWKHMDVEAHRIPIPRRRNPLVQRGDKSRGLIIVSAVMHKIKGAFFFLLQSEDGDLYKVWIEHNGEDVVALKIKYFDTVPVANSLCILKRGYIYVASEFSDQNLYQFQSLAEDDGEQEWSSTDYPENGNIDGPLPFAFFDPQPLRNLLLVDTVPSLDPITDAHVVNLLGASSDTPQIYAACGRGARSTFRTLKHGLDVAEMVSSPLPGVPTNVWTLKLTEDDEYDSYIVLSFPNGTLVLSIGETIEEVNDTGFLSSGPTLAVQQLGNAGLLQVHPYGLRHIRAADRVDEWPAPPGQTIVAATTNRRQVVIALSTAELVYFELDPEGSLSEYQEKKALPGNATCVTIAEVPEGRRRTSFLAVGCDNQTVSIISLEPDSTLDTLSLQALTAPPTSICLAEIFDTSIDKNRATMFLNIGLMNGVLLRTVVDPVDGSLSDTRLRFLGAKPPKLVRANVQGQPSVMAFSSRTWLLYTYQDMLQTQPLIYDTLEYAWSLSAAMCPDGLIGISGNTLRIFNIPKLGEKLKQDSTALTYTPRKFISHPFNSVFYMIEADHRTYSKSAIERIVKQKESEGRRVDTLLLDLPANEFGRPRAPAGHWASCVRVLDPLANETIMTLDLDEDEAAFSIAIAYFERGGGEPFLVVGTGVKTTLQPKGCKEGYLRVYAIKEQGRILEFLHKTKTDDIPLCLAGFQGFLLAGIGKSLRLYEMGKKALLRKCENNGFPTAVVTINVQGARIIVGDMQESTFYCVYRSIPTRQLLIFADDSQPRWITCVTSVDYETVACGDKFGNIFINRLDPSISEKVDDDPTGATILHEKSFLMGAAHKTEMIGHYNIGSVVTSITKIPLVAGGRDVLVYTTISGAVGALVPFVSSDDIEFMSTLEMHMRTQDISLVGRDHIAYRGYYVPIKGVVDGDLCESFSLLPYPKQQAIALDLDRSVGDVLKKLEQMRTSSAF</sequence>
<reference key="1">
    <citation type="journal article" date="2005" name="Science">
        <title>The genome of the basidiomycetous yeast and human pathogen Cryptococcus neoformans.</title>
        <authorList>
            <person name="Loftus B.J."/>
            <person name="Fung E."/>
            <person name="Roncaglia P."/>
            <person name="Rowley D."/>
            <person name="Amedeo P."/>
            <person name="Bruno D."/>
            <person name="Vamathevan J."/>
            <person name="Miranda M."/>
            <person name="Anderson I.J."/>
            <person name="Fraser J.A."/>
            <person name="Allen J.E."/>
            <person name="Bosdet I.E."/>
            <person name="Brent M.R."/>
            <person name="Chiu R."/>
            <person name="Doering T.L."/>
            <person name="Donlin M.J."/>
            <person name="D'Souza C.A."/>
            <person name="Fox D.S."/>
            <person name="Grinberg V."/>
            <person name="Fu J."/>
            <person name="Fukushima M."/>
            <person name="Haas B.J."/>
            <person name="Huang J.C."/>
            <person name="Janbon G."/>
            <person name="Jones S.J.M."/>
            <person name="Koo H.L."/>
            <person name="Krzywinski M.I."/>
            <person name="Kwon-Chung K.J."/>
            <person name="Lengeler K.B."/>
            <person name="Maiti R."/>
            <person name="Marra M.A."/>
            <person name="Marra R.E."/>
            <person name="Mathewson C.A."/>
            <person name="Mitchell T.G."/>
            <person name="Pertea M."/>
            <person name="Riggs F.R."/>
            <person name="Salzberg S.L."/>
            <person name="Schein J.E."/>
            <person name="Shvartsbeyn A."/>
            <person name="Shin H."/>
            <person name="Shumway M."/>
            <person name="Specht C.A."/>
            <person name="Suh B.B."/>
            <person name="Tenney A."/>
            <person name="Utterback T.R."/>
            <person name="Wickes B.L."/>
            <person name="Wortman J.R."/>
            <person name="Wye N.H."/>
            <person name="Kronstad J.W."/>
            <person name="Lodge J.K."/>
            <person name="Heitman J."/>
            <person name="Davis R.W."/>
            <person name="Fraser C.M."/>
            <person name="Hyman R.W."/>
        </authorList>
    </citation>
    <scope>NUCLEOTIDE SEQUENCE [LARGE SCALE GENOMIC DNA]</scope>
    <source>
        <strain>JEC21 / ATCC MYA-565</strain>
    </source>
</reference>
<accession>P0CR22</accession>
<accession>Q55ZR3</accession>
<accession>Q5KP25</accession>
<organism>
    <name type="scientific">Cryptococcus neoformans var. neoformans serotype D (strain JEC21 / ATCC MYA-565)</name>
    <name type="common">Filobasidiella neoformans</name>
    <dbReference type="NCBI Taxonomy" id="214684"/>
    <lineage>
        <taxon>Eukaryota</taxon>
        <taxon>Fungi</taxon>
        <taxon>Dikarya</taxon>
        <taxon>Basidiomycota</taxon>
        <taxon>Agaricomycotina</taxon>
        <taxon>Tremellomycetes</taxon>
        <taxon>Tremellales</taxon>
        <taxon>Cryptococcaceae</taxon>
        <taxon>Cryptococcus</taxon>
        <taxon>Cryptococcus neoformans species complex</taxon>
    </lineage>
</organism>
<protein>
    <recommendedName>
        <fullName>Pre-mRNA-splicing factor RSE1</fullName>
    </recommendedName>
</protein>
<comment type="function">
    <text evidence="1">Involved in pre-mRNA splicing and cell cycle control.</text>
</comment>
<comment type="subunit">
    <text evidence="1">Associated with the spliceosome.</text>
</comment>
<comment type="subcellular location">
    <subcellularLocation>
        <location evidence="1">Nucleus</location>
    </subcellularLocation>
</comment>
<comment type="similarity">
    <text evidence="2">Belongs to the RSE1 family.</text>
</comment>
<gene>
    <name type="primary">RSE1</name>
    <name type="ordered locus">CNA04430</name>
</gene>
<feature type="chain" id="PRO_0000218629" description="Pre-mRNA-splicing factor RSE1">
    <location>
        <begin position="1"/>
        <end position="1217"/>
    </location>
</feature>
<keyword id="KW-0507">mRNA processing</keyword>
<keyword id="KW-0508">mRNA splicing</keyword>
<keyword id="KW-0539">Nucleus</keyword>
<keyword id="KW-1185">Reference proteome</keyword>
<keyword id="KW-0747">Spliceosome</keyword>
<proteinExistence type="inferred from homology"/>
<name>RSE1_CRYNJ</name>
<dbReference type="EMBL" id="AE017341">
    <property type="protein sequence ID" value="AAW40985.1"/>
    <property type="molecule type" value="Genomic_DNA"/>
</dbReference>
<dbReference type="RefSeq" id="XP_566804.1">
    <property type="nucleotide sequence ID" value="XM_566804.1"/>
</dbReference>
<dbReference type="SMR" id="P0CR22"/>
<dbReference type="FunCoup" id="P0CR22">
    <property type="interactions" value="1116"/>
</dbReference>
<dbReference type="STRING" id="214684.P0CR22"/>
<dbReference type="PaxDb" id="214684-P0CR22"/>
<dbReference type="EnsemblFungi" id="AAW40985">
    <property type="protein sequence ID" value="AAW40985"/>
    <property type="gene ID" value="CNA04430"/>
</dbReference>
<dbReference type="GeneID" id="3253342"/>
<dbReference type="KEGG" id="cne:CNA04430"/>
<dbReference type="VEuPathDB" id="FungiDB:CNA04430"/>
<dbReference type="eggNOG" id="KOG1898">
    <property type="taxonomic scope" value="Eukaryota"/>
</dbReference>
<dbReference type="HOGENOM" id="CLU_003246_0_0_1"/>
<dbReference type="InParanoid" id="P0CR22"/>
<dbReference type="OMA" id="PRATGHW"/>
<dbReference type="OrthoDB" id="436637at2759"/>
<dbReference type="Proteomes" id="UP000002149">
    <property type="component" value="Chromosome 1"/>
</dbReference>
<dbReference type="GO" id="GO:0005634">
    <property type="term" value="C:nucleus"/>
    <property type="evidence" value="ECO:0000318"/>
    <property type="project" value="GO_Central"/>
</dbReference>
<dbReference type="GO" id="GO:0005681">
    <property type="term" value="C:spliceosomal complex"/>
    <property type="evidence" value="ECO:0007669"/>
    <property type="project" value="UniProtKB-KW"/>
</dbReference>
<dbReference type="GO" id="GO:0005686">
    <property type="term" value="C:U2 snRNP"/>
    <property type="evidence" value="ECO:0000318"/>
    <property type="project" value="GO_Central"/>
</dbReference>
<dbReference type="GO" id="GO:0030620">
    <property type="term" value="F:U2 snRNA binding"/>
    <property type="evidence" value="ECO:0000318"/>
    <property type="project" value="GO_Central"/>
</dbReference>
<dbReference type="GO" id="GO:0000398">
    <property type="term" value="P:mRNA splicing, via spliceosome"/>
    <property type="evidence" value="ECO:0000318"/>
    <property type="project" value="GO_Central"/>
</dbReference>
<dbReference type="FunFam" id="2.130.10.10:FF:001143">
    <property type="entry name" value="Pre-mRNA-splicing factor rse-1, putative"/>
    <property type="match status" value="1"/>
</dbReference>
<dbReference type="FunFam" id="2.130.10.10:FF:000628">
    <property type="entry name" value="Pre-mRNA-splicing factor RSE1"/>
    <property type="match status" value="1"/>
</dbReference>
<dbReference type="FunFam" id="2.130.10.10:FF:000068">
    <property type="entry name" value="Pre-mRNA-splicing factor rse1, variant"/>
    <property type="match status" value="1"/>
</dbReference>
<dbReference type="Gene3D" id="2.130.10.10">
    <property type="entry name" value="YVTN repeat-like/Quinoprotein amine dehydrogenase"/>
    <property type="match status" value="3"/>
</dbReference>
<dbReference type="InterPro" id="IPR018846">
    <property type="entry name" value="Beta-prop_RSE1/DDB1/CPSF1_1st"/>
</dbReference>
<dbReference type="InterPro" id="IPR004871">
    <property type="entry name" value="Cleavage/polyA-sp_fac_asu_C"/>
</dbReference>
<dbReference type="InterPro" id="IPR050358">
    <property type="entry name" value="RSE1/DDB1/CFT1/CPSF1"/>
</dbReference>
<dbReference type="InterPro" id="IPR015943">
    <property type="entry name" value="WD40/YVTN_repeat-like_dom_sf"/>
</dbReference>
<dbReference type="InterPro" id="IPR036322">
    <property type="entry name" value="WD40_repeat_dom_sf"/>
</dbReference>
<dbReference type="PANTHER" id="PTHR10644">
    <property type="entry name" value="DNA REPAIR/RNA PROCESSING CPSF FAMILY"/>
    <property type="match status" value="1"/>
</dbReference>
<dbReference type="Pfam" id="PF10433">
    <property type="entry name" value="Beta-prop_RSE1_1st"/>
    <property type="match status" value="1"/>
</dbReference>
<dbReference type="Pfam" id="PF23726">
    <property type="entry name" value="Beta-prop_RSE1_2nd"/>
    <property type="match status" value="1"/>
</dbReference>
<dbReference type="Pfam" id="PF03178">
    <property type="entry name" value="CPSF_A"/>
    <property type="match status" value="1"/>
</dbReference>
<dbReference type="SUPFAM" id="SSF50978">
    <property type="entry name" value="WD40 repeat-like"/>
    <property type="match status" value="1"/>
</dbReference>
<evidence type="ECO:0000250" key="1"/>
<evidence type="ECO:0000305" key="2"/>